<organism>
    <name type="scientific">Mus musculus</name>
    <name type="common">Mouse</name>
    <dbReference type="NCBI Taxonomy" id="10090"/>
    <lineage>
        <taxon>Eukaryota</taxon>
        <taxon>Metazoa</taxon>
        <taxon>Chordata</taxon>
        <taxon>Craniata</taxon>
        <taxon>Vertebrata</taxon>
        <taxon>Euteleostomi</taxon>
        <taxon>Mammalia</taxon>
        <taxon>Eutheria</taxon>
        <taxon>Euarchontoglires</taxon>
        <taxon>Glires</taxon>
        <taxon>Rodentia</taxon>
        <taxon>Myomorpha</taxon>
        <taxon>Muroidea</taxon>
        <taxon>Muridae</taxon>
        <taxon>Murinae</taxon>
        <taxon>Mus</taxon>
        <taxon>Mus</taxon>
    </lineage>
</organism>
<protein>
    <recommendedName>
        <fullName evidence="5">BCL2/adenovirus E1B 19 kDa protein-interacting protein 3</fullName>
    </recommendedName>
</protein>
<gene>
    <name evidence="6" type="primary">Bnip3</name>
    <name type="synonym">Nip3</name>
</gene>
<dbReference type="EMBL" id="AF041054">
    <property type="protein sequence ID" value="AAD02922.1"/>
    <property type="molecule type" value="mRNA"/>
</dbReference>
<dbReference type="EMBL" id="AK014223">
    <property type="protein sequence ID" value="BAB29214.1"/>
    <property type="molecule type" value="mRNA"/>
</dbReference>
<dbReference type="EMBL" id="AK075943">
    <property type="protein sequence ID" value="BAC36072.1"/>
    <property type="molecule type" value="mRNA"/>
</dbReference>
<dbReference type="EMBL" id="AK152610">
    <property type="protein sequence ID" value="BAE31356.1"/>
    <property type="molecule type" value="mRNA"/>
</dbReference>
<dbReference type="EMBL" id="BC046603">
    <property type="protein sequence ID" value="AAH46603.1"/>
    <property type="molecule type" value="mRNA"/>
</dbReference>
<dbReference type="CCDS" id="CCDS40168.1"/>
<dbReference type="RefSeq" id="NP_033890.1">
    <property type="nucleotide sequence ID" value="NM_009760.4"/>
</dbReference>
<dbReference type="BMRB" id="O55003"/>
<dbReference type="SMR" id="O55003"/>
<dbReference type="BioGRID" id="198377">
    <property type="interactions" value="5"/>
</dbReference>
<dbReference type="FunCoup" id="O55003">
    <property type="interactions" value="1106"/>
</dbReference>
<dbReference type="STRING" id="10090.ENSMUSP00000101718"/>
<dbReference type="GlyGen" id="O55003">
    <property type="glycosylation" value="1 site, 1 N-linked glycan (1 site)"/>
</dbReference>
<dbReference type="iPTMnet" id="O55003"/>
<dbReference type="PhosphoSitePlus" id="O55003"/>
<dbReference type="jPOST" id="O55003"/>
<dbReference type="PaxDb" id="10090-ENSMUSP00000101718"/>
<dbReference type="PeptideAtlas" id="O55003"/>
<dbReference type="ProteomicsDB" id="273752"/>
<dbReference type="Pumba" id="O55003"/>
<dbReference type="Antibodypedia" id="31">
    <property type="antibodies" value="584 antibodies from 36 providers"/>
</dbReference>
<dbReference type="DNASU" id="12176"/>
<dbReference type="Ensembl" id="ENSMUST00000106112.2">
    <property type="protein sequence ID" value="ENSMUSP00000101718.2"/>
    <property type="gene ID" value="ENSMUSG00000078566.9"/>
</dbReference>
<dbReference type="GeneID" id="12176"/>
<dbReference type="KEGG" id="mmu:12176"/>
<dbReference type="UCSC" id="uc009kfg.1">
    <property type="organism name" value="mouse"/>
</dbReference>
<dbReference type="AGR" id="MGI:109326"/>
<dbReference type="CTD" id="664"/>
<dbReference type="MGI" id="MGI:109326">
    <property type="gene designation" value="Bnip3"/>
</dbReference>
<dbReference type="VEuPathDB" id="HostDB:ENSMUSG00000078566"/>
<dbReference type="eggNOG" id="ENOG502QQ4B">
    <property type="taxonomic scope" value="Eukaryota"/>
</dbReference>
<dbReference type="GeneTree" id="ENSGT00390000013415"/>
<dbReference type="HOGENOM" id="CLU_091463_1_0_1"/>
<dbReference type="InParanoid" id="O55003"/>
<dbReference type="OMA" id="KDWKFKH"/>
<dbReference type="OrthoDB" id="5857140at2759"/>
<dbReference type="PhylomeDB" id="O55003"/>
<dbReference type="TreeFam" id="TF315424"/>
<dbReference type="BioGRID-ORCS" id="12176">
    <property type="hits" value="4 hits in 77 CRISPR screens"/>
</dbReference>
<dbReference type="ChiTaRS" id="Bnip3">
    <property type="organism name" value="mouse"/>
</dbReference>
<dbReference type="PRO" id="PR:O55003"/>
<dbReference type="Proteomes" id="UP000000589">
    <property type="component" value="Chromosome 7"/>
</dbReference>
<dbReference type="RNAct" id="O55003">
    <property type="molecule type" value="protein"/>
</dbReference>
<dbReference type="Bgee" id="ENSMUSG00000078566">
    <property type="expression patterns" value="Expressed in hindlimb stylopod muscle and 155 other cell types or tissues"/>
</dbReference>
<dbReference type="ExpressionAtlas" id="O55003">
    <property type="expression patterns" value="baseline and differential"/>
</dbReference>
<dbReference type="GO" id="GO:0005737">
    <property type="term" value="C:cytoplasm"/>
    <property type="evidence" value="ECO:0000250"/>
    <property type="project" value="UniProtKB"/>
</dbReference>
<dbReference type="GO" id="GO:0030425">
    <property type="term" value="C:dendrite"/>
    <property type="evidence" value="ECO:0000250"/>
    <property type="project" value="UniProtKB"/>
</dbReference>
<dbReference type="GO" id="GO:0005789">
    <property type="term" value="C:endoplasmic reticulum membrane"/>
    <property type="evidence" value="ECO:0007669"/>
    <property type="project" value="Ensembl"/>
</dbReference>
<dbReference type="GO" id="GO:0031966">
    <property type="term" value="C:mitochondrial membrane"/>
    <property type="evidence" value="ECO:0000314"/>
    <property type="project" value="UniProtKB"/>
</dbReference>
<dbReference type="GO" id="GO:0005741">
    <property type="term" value="C:mitochondrial outer membrane"/>
    <property type="evidence" value="ECO:0000250"/>
    <property type="project" value="UniProtKB"/>
</dbReference>
<dbReference type="GO" id="GO:0005739">
    <property type="term" value="C:mitochondrion"/>
    <property type="evidence" value="ECO:0007005"/>
    <property type="project" value="MGI"/>
</dbReference>
<dbReference type="GO" id="GO:0005635">
    <property type="term" value="C:nuclear envelope"/>
    <property type="evidence" value="ECO:0000250"/>
    <property type="project" value="UniProtKB"/>
</dbReference>
<dbReference type="GO" id="GO:0005654">
    <property type="term" value="C:nucleoplasm"/>
    <property type="evidence" value="ECO:0000250"/>
    <property type="project" value="UniProtKB"/>
</dbReference>
<dbReference type="GO" id="GO:0005634">
    <property type="term" value="C:nucleus"/>
    <property type="evidence" value="ECO:0000250"/>
    <property type="project" value="UniProtKB"/>
</dbReference>
<dbReference type="GO" id="GO:0014069">
    <property type="term" value="C:postsynaptic density"/>
    <property type="evidence" value="ECO:0000314"/>
    <property type="project" value="MGI"/>
</dbReference>
<dbReference type="GO" id="GO:0140506">
    <property type="term" value="F:endoplasmic reticulum-autophagosome adaptor activity"/>
    <property type="evidence" value="ECO:0007669"/>
    <property type="project" value="Ensembl"/>
</dbReference>
<dbReference type="GO" id="GO:0051020">
    <property type="term" value="F:GTPase binding"/>
    <property type="evidence" value="ECO:0007669"/>
    <property type="project" value="Ensembl"/>
</dbReference>
<dbReference type="GO" id="GO:0042802">
    <property type="term" value="F:identical protein binding"/>
    <property type="evidence" value="ECO:0000353"/>
    <property type="project" value="MGI"/>
</dbReference>
<dbReference type="GO" id="GO:0140580">
    <property type="term" value="F:mitochondrion autophagosome adaptor activity"/>
    <property type="evidence" value="ECO:0007669"/>
    <property type="project" value="Ensembl"/>
</dbReference>
<dbReference type="GO" id="GO:0042803">
    <property type="term" value="F:protein homodimerization activity"/>
    <property type="evidence" value="ECO:0007669"/>
    <property type="project" value="Ensembl"/>
</dbReference>
<dbReference type="GO" id="GO:0006915">
    <property type="term" value="P:apoptotic process"/>
    <property type="evidence" value="ECO:0000266"/>
    <property type="project" value="MGI"/>
</dbReference>
<dbReference type="GO" id="GO:0048102">
    <property type="term" value="P:autophagic cell death"/>
    <property type="evidence" value="ECO:0007669"/>
    <property type="project" value="Ensembl"/>
</dbReference>
<dbReference type="GO" id="GO:0050873">
    <property type="term" value="P:brown fat cell differentiation"/>
    <property type="evidence" value="ECO:0000314"/>
    <property type="project" value="MGI"/>
</dbReference>
<dbReference type="GO" id="GO:0010659">
    <property type="term" value="P:cardiac muscle cell apoptotic process"/>
    <property type="evidence" value="ECO:0007669"/>
    <property type="project" value="Ensembl"/>
</dbReference>
<dbReference type="GO" id="GO:0071279">
    <property type="term" value="P:cellular response to cobalt ion"/>
    <property type="evidence" value="ECO:0007669"/>
    <property type="project" value="Ensembl"/>
</dbReference>
<dbReference type="GO" id="GO:0070301">
    <property type="term" value="P:cellular response to hydrogen peroxide"/>
    <property type="evidence" value="ECO:0007669"/>
    <property type="project" value="Ensembl"/>
</dbReference>
<dbReference type="GO" id="GO:0071456">
    <property type="term" value="P:cellular response to hypoxia"/>
    <property type="evidence" value="ECO:0000266"/>
    <property type="project" value="MGI"/>
</dbReference>
<dbReference type="GO" id="GO:0071260">
    <property type="term" value="P:cellular response to mechanical stimulus"/>
    <property type="evidence" value="ECO:0007669"/>
    <property type="project" value="Ensembl"/>
</dbReference>
<dbReference type="GO" id="GO:0021987">
    <property type="term" value="P:cerebral cortex development"/>
    <property type="evidence" value="ECO:0007669"/>
    <property type="project" value="Ensembl"/>
</dbReference>
<dbReference type="GO" id="GO:0051607">
    <property type="term" value="P:defense response to virus"/>
    <property type="evidence" value="ECO:0000250"/>
    <property type="project" value="UniProtKB"/>
</dbReference>
<dbReference type="GO" id="GO:0140507">
    <property type="term" value="P:granzyme-mediated programmed cell death signaling pathway"/>
    <property type="evidence" value="ECO:0007669"/>
    <property type="project" value="Ensembl"/>
</dbReference>
<dbReference type="GO" id="GO:0097193">
    <property type="term" value="P:intrinsic apoptotic signaling pathway"/>
    <property type="evidence" value="ECO:0000315"/>
    <property type="project" value="MGI"/>
</dbReference>
<dbReference type="GO" id="GO:1990144">
    <property type="term" value="P:intrinsic apoptotic signaling pathway in response to hypoxia"/>
    <property type="evidence" value="ECO:0007669"/>
    <property type="project" value="Ensembl"/>
</dbReference>
<dbReference type="GO" id="GO:0043653">
    <property type="term" value="P:mitochondrial fragmentation involved in apoptotic process"/>
    <property type="evidence" value="ECO:0007669"/>
    <property type="project" value="Ensembl"/>
</dbReference>
<dbReference type="GO" id="GO:0097345">
    <property type="term" value="P:mitochondrial outer membrane permeabilization"/>
    <property type="evidence" value="ECO:0000250"/>
    <property type="project" value="UniProtKB"/>
</dbReference>
<dbReference type="GO" id="GO:0035694">
    <property type="term" value="P:mitochondrial protein catabolic process"/>
    <property type="evidence" value="ECO:0000250"/>
    <property type="project" value="UniProtKB"/>
</dbReference>
<dbReference type="GO" id="GO:0000423">
    <property type="term" value="P:mitophagy"/>
    <property type="evidence" value="ECO:0007669"/>
    <property type="project" value="Ensembl"/>
</dbReference>
<dbReference type="GO" id="GO:0045837">
    <property type="term" value="P:negative regulation of membrane potential"/>
    <property type="evidence" value="ECO:0000250"/>
    <property type="project" value="UniProtKB"/>
</dbReference>
<dbReference type="GO" id="GO:0010637">
    <property type="term" value="P:negative regulation of mitochondrial fusion"/>
    <property type="evidence" value="ECO:0007669"/>
    <property type="project" value="Ensembl"/>
</dbReference>
<dbReference type="GO" id="GO:1902109">
    <property type="term" value="P:negative regulation of mitochondrial membrane permeability involved in apoptotic process"/>
    <property type="evidence" value="ECO:0007669"/>
    <property type="project" value="Ensembl"/>
</dbReference>
<dbReference type="GO" id="GO:0010917">
    <property type="term" value="P:negative regulation of mitochondrial membrane potential"/>
    <property type="evidence" value="ECO:0007669"/>
    <property type="project" value="Ensembl"/>
</dbReference>
<dbReference type="GO" id="GO:0043069">
    <property type="term" value="P:negative regulation of programmed cell death"/>
    <property type="evidence" value="ECO:0000266"/>
    <property type="project" value="MGI"/>
</dbReference>
<dbReference type="GO" id="GO:0051402">
    <property type="term" value="P:neuron apoptotic process"/>
    <property type="evidence" value="ECO:0000250"/>
    <property type="project" value="UniProtKB"/>
</dbReference>
<dbReference type="GO" id="GO:0048709">
    <property type="term" value="P:oligodendrocyte differentiation"/>
    <property type="evidence" value="ECO:0007669"/>
    <property type="project" value="Ensembl"/>
</dbReference>
<dbReference type="GO" id="GO:0043065">
    <property type="term" value="P:positive regulation of apoptotic process"/>
    <property type="evidence" value="ECO:0000250"/>
    <property type="project" value="UniProtKB"/>
</dbReference>
<dbReference type="GO" id="GO:1903599">
    <property type="term" value="P:positive regulation of autophagy of mitochondrion"/>
    <property type="evidence" value="ECO:0007669"/>
    <property type="project" value="Ensembl"/>
</dbReference>
<dbReference type="GO" id="GO:0010666">
    <property type="term" value="P:positive regulation of cardiac muscle cell apoptotic process"/>
    <property type="evidence" value="ECO:0007669"/>
    <property type="project" value="Ensembl"/>
</dbReference>
<dbReference type="GO" id="GO:0016239">
    <property type="term" value="P:positive regulation of macroautophagy"/>
    <property type="evidence" value="ECO:0000266"/>
    <property type="project" value="MGI"/>
</dbReference>
<dbReference type="GO" id="GO:0051561">
    <property type="term" value="P:positive regulation of mitochondrial calcium ion concentration"/>
    <property type="evidence" value="ECO:0007669"/>
    <property type="project" value="Ensembl"/>
</dbReference>
<dbReference type="GO" id="GO:0090141">
    <property type="term" value="P:positive regulation of mitochondrial fission"/>
    <property type="evidence" value="ECO:0007669"/>
    <property type="project" value="Ensembl"/>
</dbReference>
<dbReference type="GO" id="GO:0043243">
    <property type="term" value="P:positive regulation of protein-containing complex disassembly"/>
    <property type="evidence" value="ECO:0007669"/>
    <property type="project" value="Ensembl"/>
</dbReference>
<dbReference type="GO" id="GO:0090200">
    <property type="term" value="P:positive regulation of release of cytochrome c from mitochondria"/>
    <property type="evidence" value="ECO:0007669"/>
    <property type="project" value="Ensembl"/>
</dbReference>
<dbReference type="GO" id="GO:0072593">
    <property type="term" value="P:reactive oxygen species metabolic process"/>
    <property type="evidence" value="ECO:0000250"/>
    <property type="project" value="UniProtKB"/>
</dbReference>
<dbReference type="GO" id="GO:0046902">
    <property type="term" value="P:regulation of mitochondrial membrane permeability"/>
    <property type="evidence" value="ECO:0000250"/>
    <property type="project" value="UniProtKB"/>
</dbReference>
<dbReference type="GO" id="GO:0048678">
    <property type="term" value="P:response to axon injury"/>
    <property type="evidence" value="ECO:0007669"/>
    <property type="project" value="Ensembl"/>
</dbReference>
<dbReference type="GO" id="GO:0009617">
    <property type="term" value="P:response to bacterium"/>
    <property type="evidence" value="ECO:0000270"/>
    <property type="project" value="MGI"/>
</dbReference>
<dbReference type="GO" id="GO:0055093">
    <property type="term" value="P:response to hyperoxia"/>
    <property type="evidence" value="ECO:0007669"/>
    <property type="project" value="Ensembl"/>
</dbReference>
<dbReference type="GO" id="GO:0001666">
    <property type="term" value="P:response to hypoxia"/>
    <property type="evidence" value="ECO:0000250"/>
    <property type="project" value="UniProtKB"/>
</dbReference>
<dbReference type="GO" id="GO:0090649">
    <property type="term" value="P:response to oxygen-glucose deprivation"/>
    <property type="evidence" value="ECO:0007669"/>
    <property type="project" value="Ensembl"/>
</dbReference>
<dbReference type="GO" id="GO:0061709">
    <property type="term" value="P:reticulophagy"/>
    <property type="evidence" value="ECO:0007669"/>
    <property type="project" value="Ensembl"/>
</dbReference>
<dbReference type="Gene3D" id="6.10.250.1020">
    <property type="match status" value="1"/>
</dbReference>
<dbReference type="InterPro" id="IPR010548">
    <property type="entry name" value="BNIP3"/>
</dbReference>
<dbReference type="PANTHER" id="PTHR15186:SF4">
    <property type="entry name" value="BCL2_ADENOVIRUS E1B 19 KDA PROTEIN-INTERACTING PROTEIN 3"/>
    <property type="match status" value="1"/>
</dbReference>
<dbReference type="PANTHER" id="PTHR15186">
    <property type="entry name" value="RE48077P"/>
    <property type="match status" value="1"/>
</dbReference>
<dbReference type="Pfam" id="PF06553">
    <property type="entry name" value="BNIP3"/>
    <property type="match status" value="1"/>
</dbReference>
<comment type="function">
    <text evidence="1">Apoptosis-inducing protein that can overcome BCL2 suppression. May play a role in repartitioning calcium between the two major intracellular calcium stores in association with BCL2 (By similarity). Involved in mitochondrial quality control via its interaction with SPATA18/MIEAP: in response to mitochondrial damage, participates in mitochondrial protein catabolic process (also named MALM) leading to the degradation of damaged proteins inside mitochondria. The physical interaction of SPATA18/MIEAP, BNIP3 and BNIP3L/NIX at the mitochondrial outer membrane may play a critical role in the translocation of lysosomal proteins from the cytoplasm to the mitochondrial matrix (By similarity). The physical interaction of SPATA18/MIEAP, BNIP3 and BNIP3L/NIX at the mitochondrial outer membrane regulates the opening of a pore in the mitochondrial double membrane in order to mediate the translocation of lysosomal proteins from the cytoplasm to the mitochondrial matrix (By similarity). Plays an important role in the calprotectin (S100A8/A9)-induced cell death pathway (By similarity).</text>
</comment>
<comment type="subunit">
    <text evidence="2">Homodimer. Binds to BCL2. Interacts with BNIP3L and ACAA2. Interacts (via BH3 domain) with SPATA18 (via coiled-coil domains). Interacts with BOK; promotes BOK oligomerization. Interacts with PPTC7; this interaction promotes BNIP3 degradation.</text>
</comment>
<comment type="subcellular location">
    <subcellularLocation>
        <location>Mitochondrion</location>
    </subcellularLocation>
    <subcellularLocation>
        <location evidence="1">Mitochondrion outer membrane</location>
        <topology evidence="1">Single-pass membrane protein</topology>
    </subcellularLocation>
    <text evidence="1">Coexpression with the EIB 19-kDa protein results in a shift in NIP3 localization pattern to the nuclear envelope. Colocalizes with ACAA2 in the mitochondria. Colocalizes with SPATA18 at the mitochondrion outer membrane (By similarity).</text>
</comment>
<comment type="similarity">
    <text evidence="5">Belongs to the NIP3 family.</text>
</comment>
<reference key="1">
    <citation type="journal article" date="1999" name="J. Biol. Chem.">
        <title>Nix and Nip3 form a subfamily of pro-apoptotic mitochondrial proteins.</title>
        <authorList>
            <person name="Chen G."/>
            <person name="Cizeau J."/>
            <person name="Vande Velde C."/>
            <person name="Park J.H."/>
            <person name="Bozek G."/>
            <person name="Bolton J."/>
            <person name="Shi L."/>
            <person name="Dubik D."/>
            <person name="Greenberg A."/>
        </authorList>
    </citation>
    <scope>NUCLEOTIDE SEQUENCE [MRNA]</scope>
</reference>
<reference key="2">
    <citation type="journal article" date="2005" name="Science">
        <title>The transcriptional landscape of the mammalian genome.</title>
        <authorList>
            <person name="Carninci P."/>
            <person name="Kasukawa T."/>
            <person name="Katayama S."/>
            <person name="Gough J."/>
            <person name="Frith M.C."/>
            <person name="Maeda N."/>
            <person name="Oyama R."/>
            <person name="Ravasi T."/>
            <person name="Lenhard B."/>
            <person name="Wells C."/>
            <person name="Kodzius R."/>
            <person name="Shimokawa K."/>
            <person name="Bajic V.B."/>
            <person name="Brenner S.E."/>
            <person name="Batalov S."/>
            <person name="Forrest A.R."/>
            <person name="Zavolan M."/>
            <person name="Davis M.J."/>
            <person name="Wilming L.G."/>
            <person name="Aidinis V."/>
            <person name="Allen J.E."/>
            <person name="Ambesi-Impiombato A."/>
            <person name="Apweiler R."/>
            <person name="Aturaliya R.N."/>
            <person name="Bailey T.L."/>
            <person name="Bansal M."/>
            <person name="Baxter L."/>
            <person name="Beisel K.W."/>
            <person name="Bersano T."/>
            <person name="Bono H."/>
            <person name="Chalk A.M."/>
            <person name="Chiu K.P."/>
            <person name="Choudhary V."/>
            <person name="Christoffels A."/>
            <person name="Clutterbuck D.R."/>
            <person name="Crowe M.L."/>
            <person name="Dalla E."/>
            <person name="Dalrymple B.P."/>
            <person name="de Bono B."/>
            <person name="Della Gatta G."/>
            <person name="di Bernardo D."/>
            <person name="Down T."/>
            <person name="Engstrom P."/>
            <person name="Fagiolini M."/>
            <person name="Faulkner G."/>
            <person name="Fletcher C.F."/>
            <person name="Fukushima T."/>
            <person name="Furuno M."/>
            <person name="Futaki S."/>
            <person name="Gariboldi M."/>
            <person name="Georgii-Hemming P."/>
            <person name="Gingeras T.R."/>
            <person name="Gojobori T."/>
            <person name="Green R.E."/>
            <person name="Gustincich S."/>
            <person name="Harbers M."/>
            <person name="Hayashi Y."/>
            <person name="Hensch T.K."/>
            <person name="Hirokawa N."/>
            <person name="Hill D."/>
            <person name="Huminiecki L."/>
            <person name="Iacono M."/>
            <person name="Ikeo K."/>
            <person name="Iwama A."/>
            <person name="Ishikawa T."/>
            <person name="Jakt M."/>
            <person name="Kanapin A."/>
            <person name="Katoh M."/>
            <person name="Kawasawa Y."/>
            <person name="Kelso J."/>
            <person name="Kitamura H."/>
            <person name="Kitano H."/>
            <person name="Kollias G."/>
            <person name="Krishnan S.P."/>
            <person name="Kruger A."/>
            <person name="Kummerfeld S.K."/>
            <person name="Kurochkin I.V."/>
            <person name="Lareau L.F."/>
            <person name="Lazarevic D."/>
            <person name="Lipovich L."/>
            <person name="Liu J."/>
            <person name="Liuni S."/>
            <person name="McWilliam S."/>
            <person name="Madan Babu M."/>
            <person name="Madera M."/>
            <person name="Marchionni L."/>
            <person name="Matsuda H."/>
            <person name="Matsuzawa S."/>
            <person name="Miki H."/>
            <person name="Mignone F."/>
            <person name="Miyake S."/>
            <person name="Morris K."/>
            <person name="Mottagui-Tabar S."/>
            <person name="Mulder N."/>
            <person name="Nakano N."/>
            <person name="Nakauchi H."/>
            <person name="Ng P."/>
            <person name="Nilsson R."/>
            <person name="Nishiguchi S."/>
            <person name="Nishikawa S."/>
            <person name="Nori F."/>
            <person name="Ohara O."/>
            <person name="Okazaki Y."/>
            <person name="Orlando V."/>
            <person name="Pang K.C."/>
            <person name="Pavan W.J."/>
            <person name="Pavesi G."/>
            <person name="Pesole G."/>
            <person name="Petrovsky N."/>
            <person name="Piazza S."/>
            <person name="Reed J."/>
            <person name="Reid J.F."/>
            <person name="Ring B.Z."/>
            <person name="Ringwald M."/>
            <person name="Rost B."/>
            <person name="Ruan Y."/>
            <person name="Salzberg S.L."/>
            <person name="Sandelin A."/>
            <person name="Schneider C."/>
            <person name="Schoenbach C."/>
            <person name="Sekiguchi K."/>
            <person name="Semple C.A."/>
            <person name="Seno S."/>
            <person name="Sessa L."/>
            <person name="Sheng Y."/>
            <person name="Shibata Y."/>
            <person name="Shimada H."/>
            <person name="Shimada K."/>
            <person name="Silva D."/>
            <person name="Sinclair B."/>
            <person name="Sperling S."/>
            <person name="Stupka E."/>
            <person name="Sugiura K."/>
            <person name="Sultana R."/>
            <person name="Takenaka Y."/>
            <person name="Taki K."/>
            <person name="Tammoja K."/>
            <person name="Tan S.L."/>
            <person name="Tang S."/>
            <person name="Taylor M.S."/>
            <person name="Tegner J."/>
            <person name="Teichmann S.A."/>
            <person name="Ueda H.R."/>
            <person name="van Nimwegen E."/>
            <person name="Verardo R."/>
            <person name="Wei C.L."/>
            <person name="Yagi K."/>
            <person name="Yamanishi H."/>
            <person name="Zabarovsky E."/>
            <person name="Zhu S."/>
            <person name="Zimmer A."/>
            <person name="Hide W."/>
            <person name="Bult C."/>
            <person name="Grimmond S.M."/>
            <person name="Teasdale R.D."/>
            <person name="Liu E.T."/>
            <person name="Brusic V."/>
            <person name="Quackenbush J."/>
            <person name="Wahlestedt C."/>
            <person name="Mattick J.S."/>
            <person name="Hume D.A."/>
            <person name="Kai C."/>
            <person name="Sasaki D."/>
            <person name="Tomaru Y."/>
            <person name="Fukuda S."/>
            <person name="Kanamori-Katayama M."/>
            <person name="Suzuki M."/>
            <person name="Aoki J."/>
            <person name="Arakawa T."/>
            <person name="Iida J."/>
            <person name="Imamura K."/>
            <person name="Itoh M."/>
            <person name="Kato T."/>
            <person name="Kawaji H."/>
            <person name="Kawagashira N."/>
            <person name="Kawashima T."/>
            <person name="Kojima M."/>
            <person name="Kondo S."/>
            <person name="Konno H."/>
            <person name="Nakano K."/>
            <person name="Ninomiya N."/>
            <person name="Nishio T."/>
            <person name="Okada M."/>
            <person name="Plessy C."/>
            <person name="Shibata K."/>
            <person name="Shiraki T."/>
            <person name="Suzuki S."/>
            <person name="Tagami M."/>
            <person name="Waki K."/>
            <person name="Watahiki A."/>
            <person name="Okamura-Oho Y."/>
            <person name="Suzuki H."/>
            <person name="Kawai J."/>
            <person name="Hayashizaki Y."/>
        </authorList>
    </citation>
    <scope>NUCLEOTIDE SEQUENCE [LARGE SCALE MRNA]</scope>
    <source>
        <strain>C57BL/6J</strain>
        <tissue>Bone marrow</tissue>
    </source>
</reference>
<reference key="3">
    <citation type="journal article" date="2004" name="Genome Res.">
        <title>The status, quality, and expansion of the NIH full-length cDNA project: the Mammalian Gene Collection (MGC).</title>
        <authorList>
            <consortium name="The MGC Project Team"/>
        </authorList>
    </citation>
    <scope>NUCLEOTIDE SEQUENCE [LARGE SCALE MRNA]</scope>
    <source>
        <tissue>Olfactory epithelium</tissue>
    </source>
</reference>
<reference key="4">
    <citation type="journal article" date="2007" name="Mol. Cell. Proteomics">
        <title>Mitochondrial phosphoproteome revealed by an improved IMAC method and MS/MS/MS.</title>
        <authorList>
            <person name="Lee J."/>
            <person name="Xu Y."/>
            <person name="Chen Y."/>
            <person name="Sprung R."/>
            <person name="Kim S.C."/>
            <person name="Xie S."/>
            <person name="Zhao Y."/>
        </authorList>
    </citation>
    <scope>PHOSPHORYLATION [LARGE SCALE ANALYSIS] AT SER-79</scope>
    <scope>IDENTIFICATION BY MASS SPECTROMETRY [LARGE SCALE ANALYSIS]</scope>
    <source>
        <tissue>Liver</tissue>
    </source>
</reference>
<reference key="5">
    <citation type="journal article" date="2007" name="Proc. Natl. Acad. Sci. U.S.A.">
        <title>Large-scale phosphorylation analysis of mouse liver.</title>
        <authorList>
            <person name="Villen J."/>
            <person name="Beausoleil S.A."/>
            <person name="Gerber S.A."/>
            <person name="Gygi S.P."/>
        </authorList>
    </citation>
    <scope>PHOSPHORYLATION [LARGE SCALE ANALYSIS] AT SER-79; SER-85 AND SER-88</scope>
    <scope>IDENTIFICATION BY MASS SPECTROMETRY [LARGE SCALE ANALYSIS]</scope>
    <source>
        <tissue>Liver</tissue>
    </source>
</reference>
<reference key="6">
    <citation type="journal article" date="2008" name="J. Proteome Res.">
        <title>Specific phosphopeptide enrichment with immobilized titanium ion affinity chromatography adsorbent for phosphoproteome analysis.</title>
        <authorList>
            <person name="Zhou H."/>
            <person name="Ye M."/>
            <person name="Dong J."/>
            <person name="Han G."/>
            <person name="Jiang X."/>
            <person name="Wu R."/>
            <person name="Zou H."/>
        </authorList>
    </citation>
    <scope>PHOSPHORYLATION [LARGE SCALE ANALYSIS] AT SER-88</scope>
    <scope>IDENTIFICATION BY MASS SPECTROMETRY [LARGE SCALE ANALYSIS]</scope>
    <source>
        <tissue>Liver</tissue>
    </source>
</reference>
<reference key="7">
    <citation type="journal article" date="2010" name="Cell">
        <title>A tissue-specific atlas of mouse protein phosphorylation and expression.</title>
        <authorList>
            <person name="Huttlin E.L."/>
            <person name="Jedrychowski M.P."/>
            <person name="Elias J.E."/>
            <person name="Goswami T."/>
            <person name="Rad R."/>
            <person name="Beausoleil S.A."/>
            <person name="Villen J."/>
            <person name="Haas W."/>
            <person name="Sowa M.E."/>
            <person name="Gygi S.P."/>
        </authorList>
    </citation>
    <scope>PHOSPHORYLATION [LARGE SCALE ANALYSIS] AT SER-77; SER-79; SER-85 AND SER-88</scope>
    <scope>IDENTIFICATION BY MASS SPECTROMETRY [LARGE SCALE ANALYSIS]</scope>
    <source>
        <tissue>Brain</tissue>
        <tissue>Brown adipose tissue</tissue>
        <tissue>Heart</tissue>
        <tissue>Kidney</tissue>
        <tissue>Liver</tissue>
        <tissue>Lung</tissue>
        <tissue>Pancreas</tissue>
        <tissue>Testis</tissue>
    </source>
</reference>
<feature type="chain" id="PRO_0000064965" description="BCL2/adenovirus E1B 19 kDa protein-interacting protein 3">
    <location>
        <begin position="1"/>
        <end position="187"/>
    </location>
</feature>
<feature type="transmembrane region" description="Helical" evidence="3">
    <location>
        <begin position="157"/>
        <end position="177"/>
    </location>
</feature>
<feature type="region of interest" description="Disordered" evidence="4">
    <location>
        <begin position="42"/>
        <end position="86"/>
    </location>
</feature>
<feature type="short sequence motif" description="BH3">
    <location>
        <begin position="93"/>
        <end position="118"/>
    </location>
</feature>
<feature type="compositionally biased region" description="Low complexity" evidence="4">
    <location>
        <begin position="50"/>
        <end position="63"/>
    </location>
</feature>
<feature type="compositionally biased region" description="Basic and acidic residues" evidence="4">
    <location>
        <begin position="71"/>
        <end position="81"/>
    </location>
</feature>
<feature type="modified residue" description="Phosphoserine" evidence="2">
    <location>
        <position position="48"/>
    </location>
</feature>
<feature type="modified residue" description="Phosphoserine" evidence="2">
    <location>
        <position position="60"/>
    </location>
</feature>
<feature type="modified residue" description="Phosphoserine" evidence="10">
    <location>
        <position position="77"/>
    </location>
</feature>
<feature type="modified residue" description="Phosphoserine" evidence="7 8 10">
    <location>
        <position position="79"/>
    </location>
</feature>
<feature type="modified residue" description="Phosphoserine" evidence="8 10">
    <location>
        <position position="85"/>
    </location>
</feature>
<feature type="modified residue" description="Phosphoserine" evidence="8 9 10">
    <location>
        <position position="88"/>
    </location>
</feature>
<evidence type="ECO:0000250" key="1"/>
<evidence type="ECO:0000250" key="2">
    <source>
        <dbReference type="UniProtKB" id="Q12983"/>
    </source>
</evidence>
<evidence type="ECO:0000255" key="3"/>
<evidence type="ECO:0000256" key="4">
    <source>
        <dbReference type="SAM" id="MobiDB-lite"/>
    </source>
</evidence>
<evidence type="ECO:0000305" key="5"/>
<evidence type="ECO:0000312" key="6">
    <source>
        <dbReference type="MGI" id="MGI:109326"/>
    </source>
</evidence>
<evidence type="ECO:0007744" key="7">
    <source>
    </source>
</evidence>
<evidence type="ECO:0007744" key="8">
    <source>
    </source>
</evidence>
<evidence type="ECO:0007744" key="9">
    <source>
    </source>
</evidence>
<evidence type="ECO:0007744" key="10">
    <source>
    </source>
</evidence>
<name>BNIP3_MOUSE</name>
<keyword id="KW-0053">Apoptosis</keyword>
<keyword id="KW-0472">Membrane</keyword>
<keyword id="KW-0496">Mitochondrion</keyword>
<keyword id="KW-1000">Mitochondrion outer membrane</keyword>
<keyword id="KW-0597">Phosphoprotein</keyword>
<keyword id="KW-1185">Reference proteome</keyword>
<keyword id="KW-0812">Transmembrane</keyword>
<keyword id="KW-1133">Transmembrane helix</keyword>
<proteinExistence type="evidence at protein level"/>
<sequence>MSQSGEENLQGSWVELHFSNGNGSSVPASVSIYNGDMEKILLDAQHESGRSSSKSSHCDSPPRSQTPQDTNRAEIDSHSFGEKNSTLSEEDYIERRREVESILKKNSDWIWDWSSRPENIPPKEFLFKHPKRTATLSMRNTSVMKKGGIFSADFLKVFLPSLLLSHLLAIGLGIYIGRRLTTSTSTF</sequence>
<accession>O55003</accession>
<accession>Q544Y4</accession>